<feature type="signal peptide" evidence="2">
    <location>
        <begin position="1"/>
        <end position="24"/>
    </location>
</feature>
<feature type="chain" id="PRO_0000024462" description="Tyrosine-protein kinase transmembrane receptor Ror">
    <location>
        <begin position="25"/>
        <end position="685"/>
    </location>
</feature>
<feature type="topological domain" description="Extracellular" evidence="2">
    <location>
        <begin position="25"/>
        <end position="317"/>
    </location>
</feature>
<feature type="transmembrane region" description="Helical" evidence="2">
    <location>
        <begin position="318"/>
        <end position="338"/>
    </location>
</feature>
<feature type="topological domain" description="Cytoplasmic" evidence="2">
    <location>
        <begin position="339"/>
        <end position="685"/>
    </location>
</feature>
<feature type="domain" description="FZ" evidence="3 10">
    <location>
        <begin position="36"/>
        <end position="225"/>
    </location>
</feature>
<feature type="domain" description="Kringle" evidence="4">
    <location>
        <begin position="236"/>
        <end position="310"/>
    </location>
</feature>
<feature type="domain" description="Protein kinase" evidence="5">
    <location>
        <begin position="410"/>
        <end position="677"/>
    </location>
</feature>
<feature type="active site" description="Proton acceptor" evidence="5 6">
    <location>
        <position position="539"/>
    </location>
</feature>
<feature type="binding site" evidence="5">
    <location>
        <begin position="416"/>
        <end position="424"/>
    </location>
    <ligand>
        <name>ATP</name>
        <dbReference type="ChEBI" id="CHEBI:30616"/>
    </ligand>
</feature>
<feature type="binding site" evidence="5">
    <location>
        <position position="442"/>
    </location>
    <ligand>
        <name>ATP</name>
        <dbReference type="ChEBI" id="CHEBI:30616"/>
    </ligand>
</feature>
<feature type="modified residue" description="Phosphothreonine" evidence="7">
    <location>
        <position position="112"/>
    </location>
</feature>
<feature type="modified residue" description="Phosphoserine" evidence="7">
    <location>
        <position position="131"/>
    </location>
</feature>
<feature type="modified residue" description="Phosphotyrosine; by autocatalysis" evidence="1">
    <location>
        <position position="565"/>
    </location>
</feature>
<feature type="modified residue" description="Phosphotyrosine; by autocatalysis" evidence="1">
    <location>
        <position position="569"/>
    </location>
</feature>
<feature type="modified residue" description="Phosphotyrosine; by autocatalysis" evidence="1">
    <location>
        <position position="570"/>
    </location>
</feature>
<feature type="glycosylation site" description="N-linked (GlcNAc...) asparagine" evidence="2">
    <location>
        <position position="45"/>
    </location>
</feature>
<feature type="glycosylation site" description="N-linked (GlcNAc...) asparagine" evidence="2">
    <location>
        <position position="63"/>
    </location>
</feature>
<feature type="glycosylation site" description="N-linked (GlcNAc...) asparagine" evidence="2">
    <location>
        <position position="129"/>
    </location>
</feature>
<feature type="glycosylation site" description="N-linked (GlcNAc...) asparagine" evidence="2">
    <location>
        <position position="144"/>
    </location>
</feature>
<feature type="glycosylation site" description="N-linked (GlcNAc...) asparagine" evidence="2">
    <location>
        <position position="250"/>
    </location>
</feature>
<feature type="disulfide bond" evidence="1">
    <location>
        <begin position="41"/>
        <end position="106"/>
    </location>
</feature>
<feature type="disulfide bond" evidence="1">
    <location>
        <begin position="49"/>
        <end position="99"/>
    </location>
</feature>
<feature type="disulfide bond" evidence="1">
    <location>
        <begin position="90"/>
        <end position="192"/>
    </location>
</feature>
<feature type="disulfide bond" evidence="1">
    <location>
        <begin position="180"/>
        <end position="222"/>
    </location>
</feature>
<feature type="disulfide bond" evidence="1">
    <location>
        <begin position="184"/>
        <end position="213"/>
    </location>
</feature>
<feature type="disulfide bond" evidence="1">
    <location>
        <begin position="237"/>
        <end position="310"/>
    </location>
</feature>
<feature type="disulfide bond" evidence="1">
    <location>
        <begin position="258"/>
        <end position="292"/>
    </location>
</feature>
<feature type="disulfide bond" evidence="1">
    <location>
        <begin position="280"/>
        <end position="305"/>
    </location>
</feature>
<reference evidence="10" key="1">
    <citation type="journal article" date="1993" name="Proc. Natl. Acad. Sci. U.S.A.">
        <title>Dror, a potential neurotrophic receptor gene, encodes a Drosophila homolog of the vertebrate Ror family of Trk-related receptor tyrosine kinases.</title>
        <authorList>
            <person name="Wilson C."/>
            <person name="Goberdhan D.C.I."/>
            <person name="Steller H."/>
        </authorList>
    </citation>
    <scope>NUCLEOTIDE SEQUENCE [MRNA]</scope>
    <scope>TISSUE SPECIFICITY</scope>
    <source>
        <strain>Canton-S</strain>
        <tissue>Larval brain</tissue>
    </source>
</reference>
<reference evidence="10" key="2">
    <citation type="journal article" date="2000" name="Science">
        <title>The genome sequence of Drosophila melanogaster.</title>
        <authorList>
            <person name="Adams M.D."/>
            <person name="Celniker S.E."/>
            <person name="Holt R.A."/>
            <person name="Evans C.A."/>
            <person name="Gocayne J.D."/>
            <person name="Amanatides P.G."/>
            <person name="Scherer S.E."/>
            <person name="Li P.W."/>
            <person name="Hoskins R.A."/>
            <person name="Galle R.F."/>
            <person name="George R.A."/>
            <person name="Lewis S.E."/>
            <person name="Richards S."/>
            <person name="Ashburner M."/>
            <person name="Henderson S.N."/>
            <person name="Sutton G.G."/>
            <person name="Wortman J.R."/>
            <person name="Yandell M.D."/>
            <person name="Zhang Q."/>
            <person name="Chen L.X."/>
            <person name="Brandon R.C."/>
            <person name="Rogers Y.-H.C."/>
            <person name="Blazej R.G."/>
            <person name="Champe M."/>
            <person name="Pfeiffer B.D."/>
            <person name="Wan K.H."/>
            <person name="Doyle C."/>
            <person name="Baxter E.G."/>
            <person name="Helt G."/>
            <person name="Nelson C.R."/>
            <person name="Miklos G.L.G."/>
            <person name="Abril J.F."/>
            <person name="Agbayani A."/>
            <person name="An H.-J."/>
            <person name="Andrews-Pfannkoch C."/>
            <person name="Baldwin D."/>
            <person name="Ballew R.M."/>
            <person name="Basu A."/>
            <person name="Baxendale J."/>
            <person name="Bayraktaroglu L."/>
            <person name="Beasley E.M."/>
            <person name="Beeson K.Y."/>
            <person name="Benos P.V."/>
            <person name="Berman B.P."/>
            <person name="Bhandari D."/>
            <person name="Bolshakov S."/>
            <person name="Borkova D."/>
            <person name="Botchan M.R."/>
            <person name="Bouck J."/>
            <person name="Brokstein P."/>
            <person name="Brottier P."/>
            <person name="Burtis K.C."/>
            <person name="Busam D.A."/>
            <person name="Butler H."/>
            <person name="Cadieu E."/>
            <person name="Center A."/>
            <person name="Chandra I."/>
            <person name="Cherry J.M."/>
            <person name="Cawley S."/>
            <person name="Dahlke C."/>
            <person name="Davenport L.B."/>
            <person name="Davies P."/>
            <person name="de Pablos B."/>
            <person name="Delcher A."/>
            <person name="Deng Z."/>
            <person name="Mays A.D."/>
            <person name="Dew I."/>
            <person name="Dietz S.M."/>
            <person name="Dodson K."/>
            <person name="Doup L.E."/>
            <person name="Downes M."/>
            <person name="Dugan-Rocha S."/>
            <person name="Dunkov B.C."/>
            <person name="Dunn P."/>
            <person name="Durbin K.J."/>
            <person name="Evangelista C.C."/>
            <person name="Ferraz C."/>
            <person name="Ferriera S."/>
            <person name="Fleischmann W."/>
            <person name="Fosler C."/>
            <person name="Gabrielian A.E."/>
            <person name="Garg N.S."/>
            <person name="Gelbart W.M."/>
            <person name="Glasser K."/>
            <person name="Glodek A."/>
            <person name="Gong F."/>
            <person name="Gorrell J.H."/>
            <person name="Gu Z."/>
            <person name="Guan P."/>
            <person name="Harris M."/>
            <person name="Harris N.L."/>
            <person name="Harvey D.A."/>
            <person name="Heiman T.J."/>
            <person name="Hernandez J.R."/>
            <person name="Houck J."/>
            <person name="Hostin D."/>
            <person name="Houston K.A."/>
            <person name="Howland T.J."/>
            <person name="Wei M.-H."/>
            <person name="Ibegwam C."/>
            <person name="Jalali M."/>
            <person name="Kalush F."/>
            <person name="Karpen G.H."/>
            <person name="Ke Z."/>
            <person name="Kennison J.A."/>
            <person name="Ketchum K.A."/>
            <person name="Kimmel B.E."/>
            <person name="Kodira C.D."/>
            <person name="Kraft C.L."/>
            <person name="Kravitz S."/>
            <person name="Kulp D."/>
            <person name="Lai Z."/>
            <person name="Lasko P."/>
            <person name="Lei Y."/>
            <person name="Levitsky A.A."/>
            <person name="Li J.H."/>
            <person name="Li Z."/>
            <person name="Liang Y."/>
            <person name="Lin X."/>
            <person name="Liu X."/>
            <person name="Mattei B."/>
            <person name="McIntosh T.C."/>
            <person name="McLeod M.P."/>
            <person name="McPherson D."/>
            <person name="Merkulov G."/>
            <person name="Milshina N.V."/>
            <person name="Mobarry C."/>
            <person name="Morris J."/>
            <person name="Moshrefi A."/>
            <person name="Mount S.M."/>
            <person name="Moy M."/>
            <person name="Murphy B."/>
            <person name="Murphy L."/>
            <person name="Muzny D.M."/>
            <person name="Nelson D.L."/>
            <person name="Nelson D.R."/>
            <person name="Nelson K.A."/>
            <person name="Nixon K."/>
            <person name="Nusskern D.R."/>
            <person name="Pacleb J.M."/>
            <person name="Palazzolo M."/>
            <person name="Pittman G.S."/>
            <person name="Pan S."/>
            <person name="Pollard J."/>
            <person name="Puri V."/>
            <person name="Reese M.G."/>
            <person name="Reinert K."/>
            <person name="Remington K."/>
            <person name="Saunders R.D.C."/>
            <person name="Scheeler F."/>
            <person name="Shen H."/>
            <person name="Shue B.C."/>
            <person name="Siden-Kiamos I."/>
            <person name="Simpson M."/>
            <person name="Skupski M.P."/>
            <person name="Smith T.J."/>
            <person name="Spier E."/>
            <person name="Spradling A.C."/>
            <person name="Stapleton M."/>
            <person name="Strong R."/>
            <person name="Sun E."/>
            <person name="Svirskas R."/>
            <person name="Tector C."/>
            <person name="Turner R."/>
            <person name="Venter E."/>
            <person name="Wang A.H."/>
            <person name="Wang X."/>
            <person name="Wang Z.-Y."/>
            <person name="Wassarman D.A."/>
            <person name="Weinstock G.M."/>
            <person name="Weissenbach J."/>
            <person name="Williams S.M."/>
            <person name="Woodage T."/>
            <person name="Worley K.C."/>
            <person name="Wu D."/>
            <person name="Yang S."/>
            <person name="Yao Q.A."/>
            <person name="Ye J."/>
            <person name="Yeh R.-F."/>
            <person name="Zaveri J.S."/>
            <person name="Zhan M."/>
            <person name="Zhang G."/>
            <person name="Zhao Q."/>
            <person name="Zheng L."/>
            <person name="Zheng X.H."/>
            <person name="Zhong F.N."/>
            <person name="Zhong W."/>
            <person name="Zhou X."/>
            <person name="Zhu S.C."/>
            <person name="Zhu X."/>
            <person name="Smith H.O."/>
            <person name="Gibbs R.A."/>
            <person name="Myers E.W."/>
            <person name="Rubin G.M."/>
            <person name="Venter J.C."/>
        </authorList>
    </citation>
    <scope>NUCLEOTIDE SEQUENCE [LARGE SCALE GENOMIC DNA]</scope>
    <source>
        <strain>Berkeley</strain>
    </source>
</reference>
<reference key="3">
    <citation type="journal article" date="2002" name="Genome Biol.">
        <title>Annotation of the Drosophila melanogaster euchromatic genome: a systematic review.</title>
        <authorList>
            <person name="Misra S."/>
            <person name="Crosby M.A."/>
            <person name="Mungall C.J."/>
            <person name="Matthews B.B."/>
            <person name="Campbell K.S."/>
            <person name="Hradecky P."/>
            <person name="Huang Y."/>
            <person name="Kaminker J.S."/>
            <person name="Millburn G.H."/>
            <person name="Prochnik S.E."/>
            <person name="Smith C.D."/>
            <person name="Tupy J.L."/>
            <person name="Whitfield E.J."/>
            <person name="Bayraktaroglu L."/>
            <person name="Berman B.P."/>
            <person name="Bettencourt B.R."/>
            <person name="Celniker S.E."/>
            <person name="de Grey A.D.N.J."/>
            <person name="Drysdale R.A."/>
            <person name="Harris N.L."/>
            <person name="Richter J."/>
            <person name="Russo S."/>
            <person name="Schroeder A.J."/>
            <person name="Shu S.Q."/>
            <person name="Stapleton M."/>
            <person name="Yamada C."/>
            <person name="Ashburner M."/>
            <person name="Gelbart W.M."/>
            <person name="Rubin G.M."/>
            <person name="Lewis S.E."/>
        </authorList>
    </citation>
    <scope>GENOME REANNOTATION</scope>
    <source>
        <strain>Berkeley</strain>
    </source>
</reference>
<reference evidence="10" key="4">
    <citation type="journal article" date="1998" name="Biochem. Biophys. Res. Commun.">
        <title>Sampling the genomic pool of protein tyrosine kinase genes using the polymerase chain reaction with genomic DNA.</title>
        <authorList>
            <person name="Oates A.C."/>
            <person name="Wollberg P."/>
            <person name="Achen M.G."/>
            <person name="Wilks A.F."/>
        </authorList>
    </citation>
    <scope>NUCLEOTIDE SEQUENCE OF 545-597</scope>
</reference>
<reference key="5">
    <citation type="journal article" date="2008" name="J. Proteome Res.">
        <title>Phosphoproteome analysis of Drosophila melanogaster embryos.</title>
        <authorList>
            <person name="Zhai B."/>
            <person name="Villen J."/>
            <person name="Beausoleil S.A."/>
            <person name="Mintseris J."/>
            <person name="Gygi S.P."/>
        </authorList>
    </citation>
    <scope>PHOSPHORYLATION [LARGE SCALE ANALYSIS] AT THR-112 AND SER-131</scope>
    <scope>IDENTIFICATION BY MASS SPECTROMETRY</scope>
    <source>
        <tissue>Embryo</tissue>
    </source>
</reference>
<evidence type="ECO:0000250" key="1"/>
<evidence type="ECO:0000255" key="2"/>
<evidence type="ECO:0000255" key="3">
    <source>
        <dbReference type="PROSITE-ProRule" id="PRU00090"/>
    </source>
</evidence>
<evidence type="ECO:0000255" key="4">
    <source>
        <dbReference type="PROSITE-ProRule" id="PRU00121"/>
    </source>
</evidence>
<evidence type="ECO:0000255" key="5">
    <source>
        <dbReference type="PROSITE-ProRule" id="PRU00159"/>
    </source>
</evidence>
<evidence type="ECO:0000255" key="6">
    <source>
        <dbReference type="PROSITE-ProRule" id="PRU10028"/>
    </source>
</evidence>
<evidence type="ECO:0000269" key="7">
    <source>
    </source>
</evidence>
<evidence type="ECO:0000269" key="8">
    <source>
    </source>
</evidence>
<evidence type="ECO:0000303" key="9">
    <source>
    </source>
</evidence>
<evidence type="ECO:0000305" key="10"/>
<dbReference type="EC" id="2.7.10.1"/>
<dbReference type="EMBL" id="L20297">
    <property type="protein sequence ID" value="AAA28860.1"/>
    <property type="molecule type" value="mRNA"/>
</dbReference>
<dbReference type="EMBL" id="AE014134">
    <property type="protein sequence ID" value="AAF52885.1"/>
    <property type="molecule type" value="Genomic_DNA"/>
</dbReference>
<dbReference type="EMBL" id="AJ002908">
    <property type="protein sequence ID" value="CAA05743.1"/>
    <property type="molecule type" value="Genomic_DNA"/>
</dbReference>
<dbReference type="PIR" id="A48289">
    <property type="entry name" value="A48289"/>
</dbReference>
<dbReference type="RefSeq" id="NP_476962.1">
    <property type="nucleotide sequence ID" value="NM_057614.3"/>
</dbReference>
<dbReference type="SMR" id="Q24488"/>
<dbReference type="BioGRID" id="60456">
    <property type="interactions" value="5"/>
</dbReference>
<dbReference type="FunCoup" id="Q24488">
    <property type="interactions" value="117"/>
</dbReference>
<dbReference type="STRING" id="7227.FBpp0079568"/>
<dbReference type="GlyCosmos" id="Q24488">
    <property type="glycosylation" value="5 sites, No reported glycans"/>
</dbReference>
<dbReference type="GlyGen" id="Q24488">
    <property type="glycosylation" value="5 sites"/>
</dbReference>
<dbReference type="iPTMnet" id="Q24488"/>
<dbReference type="PaxDb" id="7227-FBpp0079568"/>
<dbReference type="DNASU" id="34367"/>
<dbReference type="EnsemblMetazoa" id="FBtr0079978">
    <property type="protein sequence ID" value="FBpp0079568"/>
    <property type="gene ID" value="FBgn0010407"/>
</dbReference>
<dbReference type="GeneID" id="34367"/>
<dbReference type="KEGG" id="dme:Dmel_CG4926"/>
<dbReference type="UCSC" id="CG4926-RA">
    <property type="organism name" value="d. melanogaster"/>
</dbReference>
<dbReference type="AGR" id="FB:FBgn0010407"/>
<dbReference type="CTD" id="34367"/>
<dbReference type="FlyBase" id="FBgn0010407">
    <property type="gene designation" value="Ror"/>
</dbReference>
<dbReference type="VEuPathDB" id="VectorBase:FBgn0010407"/>
<dbReference type="eggNOG" id="KOG1026">
    <property type="taxonomic scope" value="Eukaryota"/>
</dbReference>
<dbReference type="GeneTree" id="ENSGT00940000166767"/>
<dbReference type="HOGENOM" id="CLU_000288_30_3_1"/>
<dbReference type="InParanoid" id="Q24488"/>
<dbReference type="OMA" id="ENSPWCF"/>
<dbReference type="OrthoDB" id="10005095at2759"/>
<dbReference type="PhylomeDB" id="Q24488"/>
<dbReference type="BRENDA" id="2.7.10.1">
    <property type="organism ID" value="1994"/>
</dbReference>
<dbReference type="Reactome" id="R-DME-5140745">
    <property type="pathway name" value="WNT5A-dependent internalization of FZD2, FZD5 and ROR2"/>
</dbReference>
<dbReference type="BioGRID-ORCS" id="34367">
    <property type="hits" value="0 hits in 3 CRISPR screens"/>
</dbReference>
<dbReference type="GenomeRNAi" id="34367"/>
<dbReference type="PRO" id="PR:Q24488"/>
<dbReference type="Proteomes" id="UP000000803">
    <property type="component" value="Chromosome 2L"/>
</dbReference>
<dbReference type="Bgee" id="FBgn0010407">
    <property type="expression patterns" value="Expressed in T neuron T4c (Drosophila) in embryonic/larval optic lobe (Drosophila) and 29 other cell types or tissues"/>
</dbReference>
<dbReference type="ExpressionAtlas" id="Q24488">
    <property type="expression patterns" value="baseline and differential"/>
</dbReference>
<dbReference type="GO" id="GO:0030424">
    <property type="term" value="C:axon"/>
    <property type="evidence" value="ECO:0000318"/>
    <property type="project" value="GO_Central"/>
</dbReference>
<dbReference type="GO" id="GO:0016020">
    <property type="term" value="C:membrane"/>
    <property type="evidence" value="ECO:0000303"/>
    <property type="project" value="UniProtKB"/>
</dbReference>
<dbReference type="GO" id="GO:0005886">
    <property type="term" value="C:plasma membrane"/>
    <property type="evidence" value="ECO:0000318"/>
    <property type="project" value="GO_Central"/>
</dbReference>
<dbReference type="GO" id="GO:0043235">
    <property type="term" value="C:receptor complex"/>
    <property type="evidence" value="ECO:0000318"/>
    <property type="project" value="GO_Central"/>
</dbReference>
<dbReference type="GO" id="GO:0005524">
    <property type="term" value="F:ATP binding"/>
    <property type="evidence" value="ECO:0007669"/>
    <property type="project" value="UniProtKB-KW"/>
</dbReference>
<dbReference type="GO" id="GO:0004713">
    <property type="term" value="F:protein tyrosine kinase activity"/>
    <property type="evidence" value="ECO:0000303"/>
    <property type="project" value="UniProtKB"/>
</dbReference>
<dbReference type="GO" id="GO:0004714">
    <property type="term" value="F:transmembrane receptor protein tyrosine kinase activity"/>
    <property type="evidence" value="ECO:0000318"/>
    <property type="project" value="GO_Central"/>
</dbReference>
<dbReference type="GO" id="GO:0017147">
    <property type="term" value="F:Wnt-protein binding"/>
    <property type="evidence" value="ECO:0000318"/>
    <property type="project" value="GO_Central"/>
</dbReference>
<dbReference type="GO" id="GO:0007169">
    <property type="term" value="P:cell surface receptor protein tyrosine kinase signaling pathway"/>
    <property type="evidence" value="ECO:0000318"/>
    <property type="project" value="GO_Central"/>
</dbReference>
<dbReference type="GO" id="GO:0007417">
    <property type="term" value="P:central nervous system development"/>
    <property type="evidence" value="ECO:0000270"/>
    <property type="project" value="UniProtKB"/>
</dbReference>
<dbReference type="GO" id="GO:0006468">
    <property type="term" value="P:protein phosphorylation"/>
    <property type="evidence" value="ECO:0000303"/>
    <property type="project" value="UniProtKB"/>
</dbReference>
<dbReference type="CDD" id="cd07459">
    <property type="entry name" value="CRD_TK_ROR_like"/>
    <property type="match status" value="1"/>
</dbReference>
<dbReference type="CDD" id="cd00108">
    <property type="entry name" value="KR"/>
    <property type="match status" value="1"/>
</dbReference>
<dbReference type="CDD" id="cd05048">
    <property type="entry name" value="PTKc_Ror"/>
    <property type="match status" value="1"/>
</dbReference>
<dbReference type="FunFam" id="1.10.510.10:FF:000554">
    <property type="entry name" value="Predicted protein"/>
    <property type="match status" value="1"/>
</dbReference>
<dbReference type="FunFam" id="1.10.2000.10:FF:000025">
    <property type="entry name" value="Tyrosine-protein kinase receptor"/>
    <property type="match status" value="1"/>
</dbReference>
<dbReference type="FunFam" id="2.40.20.10:FF:000021">
    <property type="entry name" value="Tyrosine-protein kinase receptor"/>
    <property type="match status" value="1"/>
</dbReference>
<dbReference type="FunFam" id="3.30.200.20:FF:000539">
    <property type="entry name" value="Tyrosine-protein kinase receptor"/>
    <property type="match status" value="1"/>
</dbReference>
<dbReference type="Gene3D" id="1.10.2000.10">
    <property type="entry name" value="Frizzled cysteine-rich domain"/>
    <property type="match status" value="2"/>
</dbReference>
<dbReference type="Gene3D" id="3.30.200.20">
    <property type="entry name" value="Phosphorylase Kinase, domain 1"/>
    <property type="match status" value="1"/>
</dbReference>
<dbReference type="Gene3D" id="2.40.20.10">
    <property type="entry name" value="Plasminogen Kringle 4"/>
    <property type="match status" value="1"/>
</dbReference>
<dbReference type="Gene3D" id="1.10.510.10">
    <property type="entry name" value="Transferase(Phosphotransferase) domain 1"/>
    <property type="match status" value="1"/>
</dbReference>
<dbReference type="InterPro" id="IPR020067">
    <property type="entry name" value="Frizzled_dom"/>
</dbReference>
<dbReference type="InterPro" id="IPR036790">
    <property type="entry name" value="Frizzled_dom_sf"/>
</dbReference>
<dbReference type="InterPro" id="IPR011009">
    <property type="entry name" value="Kinase-like_dom_sf"/>
</dbReference>
<dbReference type="InterPro" id="IPR000001">
    <property type="entry name" value="Kringle"/>
</dbReference>
<dbReference type="InterPro" id="IPR013806">
    <property type="entry name" value="Kringle-like"/>
</dbReference>
<dbReference type="InterPro" id="IPR018056">
    <property type="entry name" value="Kringle_CS"/>
</dbReference>
<dbReference type="InterPro" id="IPR038178">
    <property type="entry name" value="Kringle_sf"/>
</dbReference>
<dbReference type="InterPro" id="IPR000719">
    <property type="entry name" value="Prot_kinase_dom"/>
</dbReference>
<dbReference type="InterPro" id="IPR017441">
    <property type="entry name" value="Protein_kinase_ATP_BS"/>
</dbReference>
<dbReference type="InterPro" id="IPR041775">
    <property type="entry name" value="Ror-like_CRD"/>
</dbReference>
<dbReference type="InterPro" id="IPR050122">
    <property type="entry name" value="RTK"/>
</dbReference>
<dbReference type="InterPro" id="IPR001245">
    <property type="entry name" value="Ser-Thr/Tyr_kinase_cat_dom"/>
</dbReference>
<dbReference type="InterPro" id="IPR008266">
    <property type="entry name" value="Tyr_kinase_AS"/>
</dbReference>
<dbReference type="InterPro" id="IPR020635">
    <property type="entry name" value="Tyr_kinase_cat_dom"/>
</dbReference>
<dbReference type="InterPro" id="IPR002011">
    <property type="entry name" value="Tyr_kinase_rcpt_2_CS"/>
</dbReference>
<dbReference type="PANTHER" id="PTHR24416">
    <property type="entry name" value="TYROSINE-PROTEIN KINASE RECEPTOR"/>
    <property type="match status" value="1"/>
</dbReference>
<dbReference type="PANTHER" id="PTHR24416:SF611">
    <property type="entry name" value="TYROSINE-PROTEIN KINASE TRANSMEMBRANE RECEPTOR ROR"/>
    <property type="match status" value="1"/>
</dbReference>
<dbReference type="Pfam" id="PF00051">
    <property type="entry name" value="Kringle"/>
    <property type="match status" value="1"/>
</dbReference>
<dbReference type="Pfam" id="PF07714">
    <property type="entry name" value="PK_Tyr_Ser-Thr"/>
    <property type="match status" value="1"/>
</dbReference>
<dbReference type="PRINTS" id="PR00018">
    <property type="entry name" value="KRINGLE"/>
</dbReference>
<dbReference type="PRINTS" id="PR00109">
    <property type="entry name" value="TYRKINASE"/>
</dbReference>
<dbReference type="SMART" id="SM00130">
    <property type="entry name" value="KR"/>
    <property type="match status" value="1"/>
</dbReference>
<dbReference type="SMART" id="SM00220">
    <property type="entry name" value="S_TKc"/>
    <property type="match status" value="1"/>
</dbReference>
<dbReference type="SMART" id="SM00219">
    <property type="entry name" value="TyrKc"/>
    <property type="match status" value="1"/>
</dbReference>
<dbReference type="SUPFAM" id="SSF57440">
    <property type="entry name" value="Kringle-like"/>
    <property type="match status" value="1"/>
</dbReference>
<dbReference type="SUPFAM" id="SSF56112">
    <property type="entry name" value="Protein kinase-like (PK-like)"/>
    <property type="match status" value="1"/>
</dbReference>
<dbReference type="PROSITE" id="PS50038">
    <property type="entry name" value="FZ"/>
    <property type="match status" value="1"/>
</dbReference>
<dbReference type="PROSITE" id="PS00021">
    <property type="entry name" value="KRINGLE_1"/>
    <property type="match status" value="1"/>
</dbReference>
<dbReference type="PROSITE" id="PS50070">
    <property type="entry name" value="KRINGLE_2"/>
    <property type="match status" value="1"/>
</dbReference>
<dbReference type="PROSITE" id="PS00107">
    <property type="entry name" value="PROTEIN_KINASE_ATP"/>
    <property type="match status" value="1"/>
</dbReference>
<dbReference type="PROSITE" id="PS50011">
    <property type="entry name" value="PROTEIN_KINASE_DOM"/>
    <property type="match status" value="1"/>
</dbReference>
<dbReference type="PROSITE" id="PS00109">
    <property type="entry name" value="PROTEIN_KINASE_TYR"/>
    <property type="match status" value="1"/>
</dbReference>
<dbReference type="PROSITE" id="PS00239">
    <property type="entry name" value="RECEPTOR_TYR_KIN_II"/>
    <property type="match status" value="1"/>
</dbReference>
<protein>
    <recommendedName>
        <fullName>Tyrosine-protein kinase transmembrane receptor Ror</fullName>
        <shortName>dRor</shortName>
        <ecNumber>2.7.10.1</ecNumber>
    </recommendedName>
</protein>
<keyword id="KW-0067">ATP-binding</keyword>
<keyword id="KW-0217">Developmental protein</keyword>
<keyword id="KW-1015">Disulfide bond</keyword>
<keyword id="KW-0325">Glycoprotein</keyword>
<keyword id="KW-0418">Kinase</keyword>
<keyword id="KW-0420">Kringle</keyword>
<keyword id="KW-0472">Membrane</keyword>
<keyword id="KW-0547">Nucleotide-binding</keyword>
<keyword id="KW-0597">Phosphoprotein</keyword>
<keyword id="KW-0675">Receptor</keyword>
<keyword id="KW-1185">Reference proteome</keyword>
<keyword id="KW-0732">Signal</keyword>
<keyword id="KW-0808">Transferase</keyword>
<keyword id="KW-0812">Transmembrane</keyword>
<keyword id="KW-1133">Transmembrane helix</keyword>
<keyword id="KW-0829">Tyrosine-protein kinase</keyword>
<gene>
    <name type="primary">Ror</name>
    <name type="ORF">CG4926</name>
</gene>
<sequence length="685" mass="78143">MNKYSAFIVCISLVLLFTKKDVGSHNVDSRIYGFQQSSGICHIYNGTICRDVLSNAHVFVSPNLTMNDLEERLKAAYGVIKESKDMNANCRMYALPSLCFSSMPICRTPERTNLLYFANVATNAKQLKNVSIRRKRTKSKDIKNISIFKKKSTIYEDVFSTDISSKYPPTRESENLKRICREECELLENELCQKEYAIAKRHPVIGMVGVEDCQKLPQHKDCLSLGITIEVDKTENCYWEDGSTYRGVANVSASGKPCLRWSWLMKEISDFPELIGQNYCRNPGSVENSPWCFVDSSRERIIELCDIPKCADKIWIAIVGTTAAIILIFIIIFAIILFKRRTIMHYGMRNIHNINTPSADKNIYGNSQLNNAQDAGRGNLGNLSDHVALNSKLIERNTLLRINHFTLQDVEFLEELGEGAFGKVYKGQLLQPNKTTITVAIKALKENASVKTQQDFKREIELISDLKHQNIVCILGVVLNKEPYCMLFEYMANGDLHEFLISNSPTEGKSLSQLEFLQIALQISEGMQYLSAHHYVHRDLAARNCLVNEGLVVKISDFGLSRDIYSSDYYRVQSKSLLPVRWMPSESILYGKFTTESDVWSFGVVLWEIYSYGMQPYYGFSNQEVINLIRSRQLLSAPENCPTAVYSLMIECWHEQSVKRPTFTDISNRLKTWHEGHFKASNPEM</sequence>
<name>ROR1_DROME</name>
<comment type="function">
    <text evidence="9">Tyrosine-protein kinase receptor that functions during early stages of neuronal development.</text>
</comment>
<comment type="catalytic activity">
    <reaction evidence="6">
        <text>L-tyrosyl-[protein] + ATP = O-phospho-L-tyrosyl-[protein] + ADP + H(+)</text>
        <dbReference type="Rhea" id="RHEA:10596"/>
        <dbReference type="Rhea" id="RHEA-COMP:10136"/>
        <dbReference type="Rhea" id="RHEA-COMP:20101"/>
        <dbReference type="ChEBI" id="CHEBI:15378"/>
        <dbReference type="ChEBI" id="CHEBI:30616"/>
        <dbReference type="ChEBI" id="CHEBI:46858"/>
        <dbReference type="ChEBI" id="CHEBI:61978"/>
        <dbReference type="ChEBI" id="CHEBI:456216"/>
        <dbReference type="EC" id="2.7.10.1"/>
    </reaction>
</comment>
<comment type="subcellular location">
    <subcellularLocation>
        <location evidence="10">Membrane</location>
        <topology evidence="10">Single-pass type I membrane protein</topology>
    </subcellularLocation>
</comment>
<comment type="tissue specificity">
    <text evidence="8">Expressed in neurons of the developing nervous system.</text>
</comment>
<comment type="similarity">
    <text evidence="5">Belongs to the protein kinase superfamily. Tyr protein kinase family. ROR subfamily.</text>
</comment>
<accession>Q24488</accession>
<proteinExistence type="evidence at protein level"/>
<organism>
    <name type="scientific">Drosophila melanogaster</name>
    <name type="common">Fruit fly</name>
    <dbReference type="NCBI Taxonomy" id="7227"/>
    <lineage>
        <taxon>Eukaryota</taxon>
        <taxon>Metazoa</taxon>
        <taxon>Ecdysozoa</taxon>
        <taxon>Arthropoda</taxon>
        <taxon>Hexapoda</taxon>
        <taxon>Insecta</taxon>
        <taxon>Pterygota</taxon>
        <taxon>Neoptera</taxon>
        <taxon>Endopterygota</taxon>
        <taxon>Diptera</taxon>
        <taxon>Brachycera</taxon>
        <taxon>Muscomorpha</taxon>
        <taxon>Ephydroidea</taxon>
        <taxon>Drosophilidae</taxon>
        <taxon>Drosophila</taxon>
        <taxon>Sophophora</taxon>
    </lineage>
</organism>